<keyword id="KW-0378">Hydrolase</keyword>
<protein>
    <recommendedName>
        <fullName evidence="1">GTP cyclohydrolase FolE2</fullName>
        <ecNumber evidence="1">3.5.4.16</ecNumber>
    </recommendedName>
</protein>
<accession>A5IL29</accession>
<dbReference type="EC" id="3.5.4.16" evidence="1"/>
<dbReference type="EMBL" id="CP000702">
    <property type="protein sequence ID" value="ABQ46902.1"/>
    <property type="molecule type" value="Genomic_DNA"/>
</dbReference>
<dbReference type="RefSeq" id="WP_011943462.1">
    <property type="nucleotide sequence ID" value="NC_009486.1"/>
</dbReference>
<dbReference type="SMR" id="A5IL29"/>
<dbReference type="STRING" id="390874.Tpet_0884"/>
<dbReference type="KEGG" id="tpt:Tpet_0884"/>
<dbReference type="eggNOG" id="COG1469">
    <property type="taxonomic scope" value="Bacteria"/>
</dbReference>
<dbReference type="HOGENOM" id="CLU_062816_1_1_0"/>
<dbReference type="UniPathway" id="UPA00848">
    <property type="reaction ID" value="UER00151"/>
</dbReference>
<dbReference type="Proteomes" id="UP000006558">
    <property type="component" value="Chromosome"/>
</dbReference>
<dbReference type="GO" id="GO:0003934">
    <property type="term" value="F:GTP cyclohydrolase I activity"/>
    <property type="evidence" value="ECO:0007669"/>
    <property type="project" value="UniProtKB-UniRule"/>
</dbReference>
<dbReference type="GO" id="GO:0046654">
    <property type="term" value="P:tetrahydrofolate biosynthetic process"/>
    <property type="evidence" value="ECO:0007669"/>
    <property type="project" value="UniProtKB-UniRule"/>
</dbReference>
<dbReference type="Gene3D" id="3.10.270.10">
    <property type="entry name" value="Urate Oxidase"/>
    <property type="match status" value="1"/>
</dbReference>
<dbReference type="HAMAP" id="MF_01527_B">
    <property type="entry name" value="GTP_cyclohydrol_B"/>
    <property type="match status" value="1"/>
</dbReference>
<dbReference type="InterPro" id="IPR022838">
    <property type="entry name" value="GTP_cyclohydrolase_FolE2"/>
</dbReference>
<dbReference type="InterPro" id="IPR003801">
    <property type="entry name" value="GTP_cyclohydrolase_FolE2/MptA"/>
</dbReference>
<dbReference type="NCBIfam" id="NF010200">
    <property type="entry name" value="PRK13674.1-1"/>
    <property type="match status" value="1"/>
</dbReference>
<dbReference type="PANTHER" id="PTHR36445">
    <property type="entry name" value="GTP CYCLOHYDROLASE MPTA"/>
    <property type="match status" value="1"/>
</dbReference>
<dbReference type="PANTHER" id="PTHR36445:SF1">
    <property type="entry name" value="GTP CYCLOHYDROLASE MPTA"/>
    <property type="match status" value="1"/>
</dbReference>
<dbReference type="Pfam" id="PF02649">
    <property type="entry name" value="GCHY-1"/>
    <property type="match status" value="1"/>
</dbReference>
<sequence>MKDVQNEKDPRMVPLKKVGIKDLHWPLKVILKEDGYQSTVAQISCSVDLHREKRGIHMSRFIEVLNKLEVITPQIFEEILDDLIEIMEAKRAHLEIHFPYFTWKESPVSRKKSPLKVDCFVEAEKEKNFSFKIGVRTPVHTLCPCSKEISDYGAHNQRAFVEITVKTRKFIWFEDLVEIAEKNASSPLYTLLKRPDEKFVTEKAYENPRFVEDVARDVALKLEKDPRITWYRVYVESMESIHNHNAFACVEKGDFVLEG</sequence>
<evidence type="ECO:0000255" key="1">
    <source>
        <dbReference type="HAMAP-Rule" id="MF_01527"/>
    </source>
</evidence>
<reference key="1">
    <citation type="submission" date="2007-05" db="EMBL/GenBank/DDBJ databases">
        <title>Complete sequence of Thermotoga petrophila RKU-1.</title>
        <authorList>
            <consortium name="US DOE Joint Genome Institute"/>
            <person name="Copeland A."/>
            <person name="Lucas S."/>
            <person name="Lapidus A."/>
            <person name="Barry K."/>
            <person name="Glavina del Rio T."/>
            <person name="Dalin E."/>
            <person name="Tice H."/>
            <person name="Pitluck S."/>
            <person name="Sims D."/>
            <person name="Brettin T."/>
            <person name="Bruce D."/>
            <person name="Detter J.C."/>
            <person name="Han C."/>
            <person name="Tapia R."/>
            <person name="Schmutz J."/>
            <person name="Larimer F."/>
            <person name="Land M."/>
            <person name="Hauser L."/>
            <person name="Kyrpides N."/>
            <person name="Mikhailova N."/>
            <person name="Nelson K."/>
            <person name="Gogarten J.P."/>
            <person name="Noll K."/>
            <person name="Richardson P."/>
        </authorList>
    </citation>
    <scope>NUCLEOTIDE SEQUENCE [LARGE SCALE GENOMIC DNA]</scope>
    <source>
        <strain>ATCC BAA-488 / DSM 13995 / JCM 10881 / RKU-1</strain>
    </source>
</reference>
<organism>
    <name type="scientific">Thermotoga petrophila (strain ATCC BAA-488 / DSM 13995 / JCM 10881 / RKU-1)</name>
    <dbReference type="NCBI Taxonomy" id="390874"/>
    <lineage>
        <taxon>Bacteria</taxon>
        <taxon>Thermotogati</taxon>
        <taxon>Thermotogota</taxon>
        <taxon>Thermotogae</taxon>
        <taxon>Thermotogales</taxon>
        <taxon>Thermotogaceae</taxon>
        <taxon>Thermotoga</taxon>
    </lineage>
</organism>
<proteinExistence type="inferred from homology"/>
<gene>
    <name evidence="1" type="primary">folE2</name>
    <name type="ordered locus">Tpet_0884</name>
</gene>
<comment type="function">
    <text evidence="1">Converts GTP to 7,8-dihydroneopterin triphosphate.</text>
</comment>
<comment type="catalytic activity">
    <reaction evidence="1">
        <text>GTP + H2O = 7,8-dihydroneopterin 3'-triphosphate + formate + H(+)</text>
        <dbReference type="Rhea" id="RHEA:17473"/>
        <dbReference type="ChEBI" id="CHEBI:15377"/>
        <dbReference type="ChEBI" id="CHEBI:15378"/>
        <dbReference type="ChEBI" id="CHEBI:15740"/>
        <dbReference type="ChEBI" id="CHEBI:37565"/>
        <dbReference type="ChEBI" id="CHEBI:58462"/>
        <dbReference type="EC" id="3.5.4.16"/>
    </reaction>
</comment>
<comment type="pathway">
    <text evidence="1">Cofactor biosynthesis; 7,8-dihydroneopterin triphosphate biosynthesis; 7,8-dihydroneopterin triphosphate from GTP: step 1/1.</text>
</comment>
<comment type="similarity">
    <text evidence="1">Belongs to the GTP cyclohydrolase IV family.</text>
</comment>
<feature type="chain" id="PRO_1000068672" description="GTP cyclohydrolase FolE2">
    <location>
        <begin position="1"/>
        <end position="259"/>
    </location>
</feature>
<feature type="site" description="May be catalytically important" evidence="1">
    <location>
        <position position="143"/>
    </location>
</feature>
<name>GCH4_THEP1</name>